<organism>
    <name type="scientific">Nocardia farcinica (strain IFM 10152)</name>
    <dbReference type="NCBI Taxonomy" id="247156"/>
    <lineage>
        <taxon>Bacteria</taxon>
        <taxon>Bacillati</taxon>
        <taxon>Actinomycetota</taxon>
        <taxon>Actinomycetes</taxon>
        <taxon>Mycobacteriales</taxon>
        <taxon>Nocardiaceae</taxon>
        <taxon>Nocardia</taxon>
    </lineage>
</organism>
<keyword id="KW-0413">Isomerase</keyword>
<keyword id="KW-1185">Reference proteome</keyword>
<keyword id="KW-0819">tRNA processing</keyword>
<accession>Q5YSE0</accession>
<evidence type="ECO:0000255" key="1">
    <source>
        <dbReference type="HAMAP-Rule" id="MF_01080"/>
    </source>
</evidence>
<reference key="1">
    <citation type="journal article" date="2004" name="Proc. Natl. Acad. Sci. U.S.A.">
        <title>The complete genomic sequence of Nocardia farcinica IFM 10152.</title>
        <authorList>
            <person name="Ishikawa J."/>
            <person name="Yamashita A."/>
            <person name="Mikami Y."/>
            <person name="Hoshino Y."/>
            <person name="Kurita H."/>
            <person name="Hotta K."/>
            <person name="Shiba T."/>
            <person name="Hattori M."/>
        </authorList>
    </citation>
    <scope>NUCLEOTIDE SEQUENCE [LARGE SCALE GENOMIC DNA]</scope>
    <source>
        <strain>IFM 10152</strain>
    </source>
</reference>
<protein>
    <recommendedName>
        <fullName evidence="1">tRNA pseudouridine synthase B</fullName>
        <ecNumber evidence="1">5.4.99.25</ecNumber>
    </recommendedName>
    <alternativeName>
        <fullName evidence="1">tRNA pseudouridine(55) synthase</fullName>
        <shortName evidence="1">Psi55 synthase</shortName>
    </alternativeName>
    <alternativeName>
        <fullName evidence="1">tRNA pseudouridylate synthase</fullName>
    </alternativeName>
    <alternativeName>
        <fullName evidence="1">tRNA-uridine isomerase</fullName>
    </alternativeName>
</protein>
<name>TRUB_NOCFA</name>
<comment type="function">
    <text evidence="1">Responsible for synthesis of pseudouridine from uracil-55 in the psi GC loop of transfer RNAs.</text>
</comment>
<comment type="catalytic activity">
    <reaction evidence="1">
        <text>uridine(55) in tRNA = pseudouridine(55) in tRNA</text>
        <dbReference type="Rhea" id="RHEA:42532"/>
        <dbReference type="Rhea" id="RHEA-COMP:10101"/>
        <dbReference type="Rhea" id="RHEA-COMP:10102"/>
        <dbReference type="ChEBI" id="CHEBI:65314"/>
        <dbReference type="ChEBI" id="CHEBI:65315"/>
        <dbReference type="EC" id="5.4.99.25"/>
    </reaction>
</comment>
<comment type="similarity">
    <text evidence="1">Belongs to the pseudouridine synthase TruB family. Type 1 subfamily.</text>
</comment>
<gene>
    <name evidence="1" type="primary">truB</name>
    <name type="ordered locus">NFA_40530</name>
</gene>
<feature type="chain" id="PRO_0000121877" description="tRNA pseudouridine synthase B">
    <location>
        <begin position="1"/>
        <end position="306"/>
    </location>
</feature>
<feature type="active site" description="Nucleophile" evidence="1">
    <location>
        <position position="51"/>
    </location>
</feature>
<dbReference type="EC" id="5.4.99.25" evidence="1"/>
<dbReference type="EMBL" id="AP006618">
    <property type="protein sequence ID" value="BAD58901.1"/>
    <property type="molecule type" value="Genomic_DNA"/>
</dbReference>
<dbReference type="RefSeq" id="WP_011210586.1">
    <property type="nucleotide sequence ID" value="NC_006361.1"/>
</dbReference>
<dbReference type="SMR" id="Q5YSE0"/>
<dbReference type="STRING" id="247156.NFA_40530"/>
<dbReference type="GeneID" id="61134697"/>
<dbReference type="KEGG" id="nfa:NFA_40530"/>
<dbReference type="eggNOG" id="COG0130">
    <property type="taxonomic scope" value="Bacteria"/>
</dbReference>
<dbReference type="HOGENOM" id="CLU_032087_0_0_11"/>
<dbReference type="OrthoDB" id="9802309at2"/>
<dbReference type="Proteomes" id="UP000006820">
    <property type="component" value="Chromosome"/>
</dbReference>
<dbReference type="GO" id="GO:0003723">
    <property type="term" value="F:RNA binding"/>
    <property type="evidence" value="ECO:0007669"/>
    <property type="project" value="InterPro"/>
</dbReference>
<dbReference type="GO" id="GO:0160148">
    <property type="term" value="F:tRNA pseudouridine(55) synthase activity"/>
    <property type="evidence" value="ECO:0007669"/>
    <property type="project" value="UniProtKB-EC"/>
</dbReference>
<dbReference type="GO" id="GO:1990481">
    <property type="term" value="P:mRNA pseudouridine synthesis"/>
    <property type="evidence" value="ECO:0007669"/>
    <property type="project" value="TreeGrafter"/>
</dbReference>
<dbReference type="GO" id="GO:0031119">
    <property type="term" value="P:tRNA pseudouridine synthesis"/>
    <property type="evidence" value="ECO:0007669"/>
    <property type="project" value="UniProtKB-UniRule"/>
</dbReference>
<dbReference type="CDD" id="cd02573">
    <property type="entry name" value="PseudoU_synth_EcTruB"/>
    <property type="match status" value="1"/>
</dbReference>
<dbReference type="FunFam" id="3.30.2350.10:FF:000011">
    <property type="entry name" value="tRNA pseudouridine synthase B"/>
    <property type="match status" value="1"/>
</dbReference>
<dbReference type="Gene3D" id="3.30.2350.10">
    <property type="entry name" value="Pseudouridine synthase"/>
    <property type="match status" value="1"/>
</dbReference>
<dbReference type="Gene3D" id="2.30.130.10">
    <property type="entry name" value="PUA domain"/>
    <property type="match status" value="1"/>
</dbReference>
<dbReference type="HAMAP" id="MF_01080">
    <property type="entry name" value="TruB_bact"/>
    <property type="match status" value="1"/>
</dbReference>
<dbReference type="InterPro" id="IPR020103">
    <property type="entry name" value="PsdUridine_synth_cat_dom_sf"/>
</dbReference>
<dbReference type="InterPro" id="IPR002501">
    <property type="entry name" value="PsdUridine_synth_N"/>
</dbReference>
<dbReference type="InterPro" id="IPR015947">
    <property type="entry name" value="PUA-like_sf"/>
</dbReference>
<dbReference type="InterPro" id="IPR036974">
    <property type="entry name" value="PUA_sf"/>
</dbReference>
<dbReference type="InterPro" id="IPR015225">
    <property type="entry name" value="tRNA_psdUridine_synth_fam2_C"/>
</dbReference>
<dbReference type="InterPro" id="IPR014780">
    <property type="entry name" value="tRNA_psdUridine_synth_TruB"/>
</dbReference>
<dbReference type="InterPro" id="IPR032819">
    <property type="entry name" value="TruB_C"/>
</dbReference>
<dbReference type="NCBIfam" id="TIGR00431">
    <property type="entry name" value="TruB"/>
    <property type="match status" value="1"/>
</dbReference>
<dbReference type="PANTHER" id="PTHR13767:SF2">
    <property type="entry name" value="PSEUDOURIDYLATE SYNTHASE TRUB1"/>
    <property type="match status" value="1"/>
</dbReference>
<dbReference type="PANTHER" id="PTHR13767">
    <property type="entry name" value="TRNA-PSEUDOURIDINE SYNTHASE"/>
    <property type="match status" value="1"/>
</dbReference>
<dbReference type="Pfam" id="PF09142">
    <property type="entry name" value="TruB_C"/>
    <property type="match status" value="1"/>
</dbReference>
<dbReference type="Pfam" id="PF16198">
    <property type="entry name" value="TruB_C_2"/>
    <property type="match status" value="1"/>
</dbReference>
<dbReference type="Pfam" id="PF01509">
    <property type="entry name" value="TruB_N"/>
    <property type="match status" value="1"/>
</dbReference>
<dbReference type="SUPFAM" id="SSF55120">
    <property type="entry name" value="Pseudouridine synthase"/>
    <property type="match status" value="1"/>
</dbReference>
<dbReference type="SUPFAM" id="SSF88697">
    <property type="entry name" value="PUA domain-like"/>
    <property type="match status" value="1"/>
</dbReference>
<sequence length="306" mass="32184">MGERSAPTRRVDPLGGLLVVDKDGGMTSHDVVARCRKILGTRKIGHAGTLDPMATGVLVLGVERATKLLGLLTLTTKAYTATIRLGSATTTDDAEGEVLTTVPAGHLGDAEVAAGVAALTGDIQQVPATVSAIKIGGERAYARHRAGEQVELAARPVTVSRFEVLARRDVAGFVDLDVVVECSSGTYVRALARDLGAALGVGGHLTALRRTRVGPFTLDHARTLDALADEPRLNLDMDEAVRIAFPHRAIDAREAESLRDGRWLDPVGIPGVYAALTADGTAIALLEEKGKRASPVFVVRPRGLVD</sequence>
<proteinExistence type="inferred from homology"/>